<protein>
    <recommendedName>
        <fullName evidence="1">Catalase-peroxidase</fullName>
        <shortName evidence="1">CP</shortName>
        <ecNumber evidence="1">1.11.1.21</ecNumber>
    </recommendedName>
    <alternativeName>
        <fullName evidence="1">Peroxidase/catalase</fullName>
    </alternativeName>
    <alternativeName>
        <fullName>Protein Mi85</fullName>
    </alternativeName>
</protein>
<organism>
    <name type="scientific">Mycobacterium intracellulare</name>
    <dbReference type="NCBI Taxonomy" id="1767"/>
    <lineage>
        <taxon>Bacteria</taxon>
        <taxon>Bacillati</taxon>
        <taxon>Actinomycetota</taxon>
        <taxon>Actinomycetes</taxon>
        <taxon>Mycobacteriales</taxon>
        <taxon>Mycobacteriaceae</taxon>
        <taxon>Mycobacterium</taxon>
        <taxon>Mycobacterium avium complex (MAC)</taxon>
    </lineage>
</organism>
<comment type="function">
    <text>Bifunctional enzyme with both catalase and broad-spectrum peroxidase activity. May play a role in the intracellular survival of mycobacteria.</text>
</comment>
<comment type="catalytic activity">
    <reaction evidence="1">
        <text>H2O2 + AH2 = A + 2 H2O</text>
        <dbReference type="Rhea" id="RHEA:30275"/>
        <dbReference type="ChEBI" id="CHEBI:13193"/>
        <dbReference type="ChEBI" id="CHEBI:15377"/>
        <dbReference type="ChEBI" id="CHEBI:16240"/>
        <dbReference type="ChEBI" id="CHEBI:17499"/>
        <dbReference type="EC" id="1.11.1.21"/>
    </reaction>
</comment>
<comment type="catalytic activity">
    <reaction evidence="1">
        <text>2 H2O2 = O2 + 2 H2O</text>
        <dbReference type="Rhea" id="RHEA:20309"/>
        <dbReference type="ChEBI" id="CHEBI:15377"/>
        <dbReference type="ChEBI" id="CHEBI:15379"/>
        <dbReference type="ChEBI" id="CHEBI:16240"/>
        <dbReference type="EC" id="1.11.1.21"/>
    </reaction>
</comment>
<comment type="cofactor">
    <cofactor evidence="1">
        <name>heme b</name>
        <dbReference type="ChEBI" id="CHEBI:60344"/>
    </cofactor>
    <text evidence="1">Binds 1 heme b (iron(II)-protoporphyrin IX) group per dimer.</text>
</comment>
<comment type="subunit">
    <text evidence="1">Homodimer or homotetramer.</text>
</comment>
<comment type="PTM">
    <text evidence="1">Formation of the three residue Trp-Tyr-Met cross-link is important for the catalase, but not the peroxidase activity of the enzyme.</text>
</comment>
<comment type="similarity">
    <text evidence="1">Belongs to the peroxidase family. Peroxidase/catalase subfamily.</text>
</comment>
<proteinExistence type="inferred from homology"/>
<sequence length="746" mass="81418">MSSDTSSSRPPQPDSGTASKSESENPAIPSPKPKAHAPLTNRDWWPDQVDVSSLHPHSPLSNPLGDDFDYAAEFAKLDVEALKADMISLMTTSQDWWPADYGHYGGLFIRMSWHAAGTYRIHDGRGGAGQGMQRFAPLNSWPDNASLDKARRLLWPIKKKYGNKISWADLITYAGNVALESMGFKTFGFGFGREDVWEPEEILWGEEEEWLGTDKRYSGERELAQPYGATTMGLIYVNPEGPEGKPDPIAAAIDIRETFGRMAMNDEETAALIVGGHSFGKTHGAGDADLVGPEPEAAPIEQQGLGWKSSYGTGSGKDAITSGLEVVWTPTPTKWDNSFLETLYGYEWELTKSPAGAWQFTAKDGAGAGTIPDPFGGAGRAPTMLVTDISLRESPIYADITRRWLDHPEELADAFAKAWYKLLHRDMGPISRYLGPWVAEPQLWQDPVPAVDHELVDDNDVAALKKKVLDSGLSIPQLVKTAWSAAASYRNTDKRGGANGGRLRLQPQRSWEVNEPSELDKVLPVLEKIQQDFNASASGGKKISLADLIVLAGSAAVEKAAKDAGYEISVHFAPGRTDASQESTDVESFAVLEPRADGFRNYIRPGEKAPLEQLLIERAYLLGVTGPEMTVLVGGLRALGANHGSSKHGVFTDRPGALTNDFFVNLLDMGTEWKASETAENVYEGRDRASGALKWTATANDLVFGSNSVLRGLVEVYAQDDAHGKFVEDFVAAWVKVMNSDRFDLK</sequence>
<reference key="1">
    <citation type="journal article" date="1992" name="J. Gen. Microbiol.">
        <title>The catalase-peroxidase of Mycobacterium intracellulare: nucleotide sequence analysis and expression in Escherichia coli.</title>
        <authorList>
            <person name="Morris S.L."/>
            <person name="Nair J."/>
            <person name="Rouse D.A."/>
        </authorList>
    </citation>
    <scope>NUCLEOTIDE SEQUENCE [GENOMIC DNA]</scope>
</reference>
<feature type="chain" id="PRO_0000055570" description="Catalase-peroxidase">
    <location>
        <begin position="1"/>
        <end position="746"/>
    </location>
</feature>
<feature type="region of interest" description="Disordered" evidence="2">
    <location>
        <begin position="1"/>
        <end position="42"/>
    </location>
</feature>
<feature type="compositionally biased region" description="Polar residues" evidence="2">
    <location>
        <begin position="1"/>
        <end position="20"/>
    </location>
</feature>
<feature type="active site" description="Proton acceptor" evidence="1">
    <location>
        <position position="114"/>
    </location>
</feature>
<feature type="binding site" description="axial binding residue" evidence="1">
    <location>
        <position position="277"/>
    </location>
    <ligand>
        <name>heme b</name>
        <dbReference type="ChEBI" id="CHEBI:60344"/>
    </ligand>
    <ligandPart>
        <name>Fe</name>
        <dbReference type="ChEBI" id="CHEBI:18248"/>
    </ligandPart>
</feature>
<feature type="site" description="Transition state stabilizer" evidence="1">
    <location>
        <position position="110"/>
    </location>
</feature>
<feature type="cross-link" description="Tryptophyl-tyrosyl-methioninium (Trp-Tyr) (with M-262)" evidence="1">
    <location>
        <begin position="113"/>
        <end position="236"/>
    </location>
</feature>
<feature type="cross-link" description="Tryptophyl-tyrosyl-methioninium (Tyr-Met) (with W-113)" evidence="1">
    <location>
        <begin position="236"/>
        <end position="262"/>
    </location>
</feature>
<keyword id="KW-0349">Heme</keyword>
<keyword id="KW-0376">Hydrogen peroxide</keyword>
<keyword id="KW-0408">Iron</keyword>
<keyword id="KW-0479">Metal-binding</keyword>
<keyword id="KW-0560">Oxidoreductase</keyword>
<keyword id="KW-0575">Peroxidase</keyword>
<dbReference type="EC" id="1.11.1.21" evidence="1"/>
<dbReference type="EMBL" id="M86741">
    <property type="protein sequence ID" value="AAA25360.1"/>
    <property type="molecule type" value="Genomic_DNA"/>
</dbReference>
<dbReference type="PIR" id="A47685">
    <property type="entry name" value="A47685"/>
</dbReference>
<dbReference type="RefSeq" id="WP_038536301.1">
    <property type="nucleotide sequence ID" value="NZ_JAEKMU010000028.1"/>
</dbReference>
<dbReference type="SMR" id="Q04657"/>
<dbReference type="PeroxiBase" id="2433">
    <property type="entry name" value="MinCP01"/>
</dbReference>
<dbReference type="GO" id="GO:0005829">
    <property type="term" value="C:cytosol"/>
    <property type="evidence" value="ECO:0007669"/>
    <property type="project" value="TreeGrafter"/>
</dbReference>
<dbReference type="GO" id="GO:0004096">
    <property type="term" value="F:catalase activity"/>
    <property type="evidence" value="ECO:0007669"/>
    <property type="project" value="UniProtKB-UniRule"/>
</dbReference>
<dbReference type="GO" id="GO:0020037">
    <property type="term" value="F:heme binding"/>
    <property type="evidence" value="ECO:0007669"/>
    <property type="project" value="InterPro"/>
</dbReference>
<dbReference type="GO" id="GO:0046872">
    <property type="term" value="F:metal ion binding"/>
    <property type="evidence" value="ECO:0007669"/>
    <property type="project" value="UniProtKB-KW"/>
</dbReference>
<dbReference type="GO" id="GO:0070301">
    <property type="term" value="P:cellular response to hydrogen peroxide"/>
    <property type="evidence" value="ECO:0007669"/>
    <property type="project" value="TreeGrafter"/>
</dbReference>
<dbReference type="GO" id="GO:0042744">
    <property type="term" value="P:hydrogen peroxide catabolic process"/>
    <property type="evidence" value="ECO:0007669"/>
    <property type="project" value="UniProtKB-KW"/>
</dbReference>
<dbReference type="CDD" id="cd00649">
    <property type="entry name" value="catalase_peroxidase_1"/>
    <property type="match status" value="1"/>
</dbReference>
<dbReference type="CDD" id="cd08200">
    <property type="entry name" value="catalase_peroxidase_2"/>
    <property type="match status" value="1"/>
</dbReference>
<dbReference type="FunFam" id="1.10.420.10:FF:000002">
    <property type="entry name" value="Catalase-peroxidase"/>
    <property type="match status" value="1"/>
</dbReference>
<dbReference type="FunFam" id="1.10.420.10:FF:000004">
    <property type="entry name" value="Catalase-peroxidase"/>
    <property type="match status" value="1"/>
</dbReference>
<dbReference type="FunFam" id="1.10.520.10:FF:000002">
    <property type="entry name" value="Catalase-peroxidase"/>
    <property type="match status" value="1"/>
</dbReference>
<dbReference type="Gene3D" id="1.10.520.10">
    <property type="match status" value="2"/>
</dbReference>
<dbReference type="Gene3D" id="1.10.420.10">
    <property type="entry name" value="Peroxidase, domain 2"/>
    <property type="match status" value="2"/>
</dbReference>
<dbReference type="HAMAP" id="MF_01961">
    <property type="entry name" value="Catal_peroxid"/>
    <property type="match status" value="1"/>
</dbReference>
<dbReference type="InterPro" id="IPR000763">
    <property type="entry name" value="Catalase_peroxidase"/>
</dbReference>
<dbReference type="InterPro" id="IPR002016">
    <property type="entry name" value="Haem_peroxidase"/>
</dbReference>
<dbReference type="InterPro" id="IPR010255">
    <property type="entry name" value="Haem_peroxidase_sf"/>
</dbReference>
<dbReference type="InterPro" id="IPR019794">
    <property type="entry name" value="Peroxidases_AS"/>
</dbReference>
<dbReference type="InterPro" id="IPR019793">
    <property type="entry name" value="Peroxidases_heam-ligand_BS"/>
</dbReference>
<dbReference type="NCBIfam" id="TIGR00198">
    <property type="entry name" value="cat_per_HPI"/>
    <property type="match status" value="1"/>
</dbReference>
<dbReference type="NCBIfam" id="NF011635">
    <property type="entry name" value="PRK15061.1"/>
    <property type="match status" value="1"/>
</dbReference>
<dbReference type="PANTHER" id="PTHR30555:SF0">
    <property type="entry name" value="CATALASE-PEROXIDASE"/>
    <property type="match status" value="1"/>
</dbReference>
<dbReference type="PANTHER" id="PTHR30555">
    <property type="entry name" value="HYDROPEROXIDASE I, BIFUNCTIONAL CATALASE-PEROXIDASE"/>
    <property type="match status" value="1"/>
</dbReference>
<dbReference type="Pfam" id="PF00141">
    <property type="entry name" value="peroxidase"/>
    <property type="match status" value="2"/>
</dbReference>
<dbReference type="PRINTS" id="PR00460">
    <property type="entry name" value="BPEROXIDASE"/>
</dbReference>
<dbReference type="PRINTS" id="PR00458">
    <property type="entry name" value="PEROXIDASE"/>
</dbReference>
<dbReference type="SUPFAM" id="SSF48113">
    <property type="entry name" value="Heme-dependent peroxidases"/>
    <property type="match status" value="2"/>
</dbReference>
<dbReference type="PROSITE" id="PS00435">
    <property type="entry name" value="PEROXIDASE_1"/>
    <property type="match status" value="1"/>
</dbReference>
<dbReference type="PROSITE" id="PS00436">
    <property type="entry name" value="PEROXIDASE_2"/>
    <property type="match status" value="1"/>
</dbReference>
<dbReference type="PROSITE" id="PS50873">
    <property type="entry name" value="PEROXIDASE_4"/>
    <property type="match status" value="1"/>
</dbReference>
<accession>Q04657</accession>
<gene>
    <name evidence="1" type="primary">katG</name>
    <name type="synonym">Mi85</name>
</gene>
<evidence type="ECO:0000255" key="1">
    <source>
        <dbReference type="HAMAP-Rule" id="MF_01961"/>
    </source>
</evidence>
<evidence type="ECO:0000256" key="2">
    <source>
        <dbReference type="SAM" id="MobiDB-lite"/>
    </source>
</evidence>
<name>KATG_MYCIT</name>